<proteinExistence type="inferred from homology"/>
<keyword id="KW-0489">Methyltransferase</keyword>
<keyword id="KW-0511">Multifunctional enzyme</keyword>
<keyword id="KW-0521">NADP</keyword>
<keyword id="KW-0545">Nucleotide biosynthesis</keyword>
<keyword id="KW-0554">One-carbon metabolism</keyword>
<keyword id="KW-0560">Oxidoreductase</keyword>
<keyword id="KW-0808">Transferase</keyword>
<accession>P16126</accession>
<protein>
    <recommendedName>
        <fullName>Bifunctional dihydrofolate reductase-thymidylate synthase</fullName>
        <shortName>DHFR-TS</shortName>
    </recommendedName>
    <domain>
        <recommendedName>
            <fullName>Dihydrofolate reductase</fullName>
            <ecNumber>1.5.1.3</ecNumber>
        </recommendedName>
    </domain>
    <domain>
        <recommendedName>
            <fullName>Thymidylate synthase</fullName>
            <ecNumber>2.1.1.45</ecNumber>
        </recommendedName>
    </domain>
</protein>
<reference key="1">
    <citation type="journal article" date="1990" name="Nucleic Acids Res.">
        <title>Sequence of the dihydrofolate reductase-thymidylate synthase (DHFR-TS) gene of Leishmania amazonensis.</title>
        <authorList>
            <person name="Nelson K."/>
            <person name="Alonso G."/>
            <person name="Langer P.J."/>
            <person name="Beverley S.M."/>
        </authorList>
    </citation>
    <scope>NUCLEOTIDE SEQUENCE [GENOMIC DNA]</scope>
    <source>
        <strain>MHOM/BR/77/LTB0016/C1S1</strain>
    </source>
</reference>
<sequence length="520" mass="58610">MSRAAAKFKIPMPVTKADFAFPSLRAFSIVVALDKQHGIGDGESIPWRVPEDMAFFKDQTTLLRNKKPPTDKKRNAVVMGRKTWESVPVKFRPLKGRLNVVLSSKATVEELLAPLPEEKRAAAAQDIVVVNGGLAAAVRLLARPPYCSSIETAYCVGGAQVYADAMLSPCVEKLQEVYLTRIHTTAPACTRFFPFPPENAATAWDLASSQGRRKSAVDGLEFEICKYVPRNHEERQYLELIDRIMKTGIAKEDRTGVGTLSLFGAQMRFSLRDNRLPLLTTKRVFWRGVCEELLWFLRGETNAQLLADKDIHIWDGNGSREFLDSRGLTENTEMDLGPVYGFQWRHFGAEYRGLEANYDGEGVDQIKFIVETIKANPNDRRLLFTAWNPCALHKMALPPCHLLAQFYVNTEKSELSCMLYQRSCDMGLGVPFNIASYALLTILIAKATGLRPGELVHTLGDAHVYRSHIDALKAQLERVPHAFPTLVFKEERQFLEDYELMDMEVIDYVPHPPIKMEMAV</sequence>
<organism>
    <name type="scientific">Leishmania amazonensis</name>
    <dbReference type="NCBI Taxonomy" id="5659"/>
    <lineage>
        <taxon>Eukaryota</taxon>
        <taxon>Discoba</taxon>
        <taxon>Euglenozoa</taxon>
        <taxon>Kinetoplastea</taxon>
        <taxon>Metakinetoplastina</taxon>
        <taxon>Trypanosomatida</taxon>
        <taxon>Trypanosomatidae</taxon>
        <taxon>Leishmaniinae</taxon>
        <taxon>Leishmania</taxon>
    </lineage>
</organism>
<comment type="function">
    <text evidence="1">Bifunctional enzyme. Involved in de novo dTMP biosynthesis. Key enzyme in folate metabolism. Catalyzes an essential reaction for de novo glycine and purine synthesis, DNA precursor synthesis, and for the conversion of dUMP to dTMP (By similarity).</text>
</comment>
<comment type="catalytic activity">
    <reaction>
        <text>(6S)-5,6,7,8-tetrahydrofolate + NADP(+) = 7,8-dihydrofolate + NADPH + H(+)</text>
        <dbReference type="Rhea" id="RHEA:15009"/>
        <dbReference type="ChEBI" id="CHEBI:15378"/>
        <dbReference type="ChEBI" id="CHEBI:57451"/>
        <dbReference type="ChEBI" id="CHEBI:57453"/>
        <dbReference type="ChEBI" id="CHEBI:57783"/>
        <dbReference type="ChEBI" id="CHEBI:58349"/>
        <dbReference type="EC" id="1.5.1.3"/>
    </reaction>
</comment>
<comment type="catalytic activity">
    <reaction>
        <text>dUMP + (6R)-5,10-methylene-5,6,7,8-tetrahydrofolate = 7,8-dihydrofolate + dTMP</text>
        <dbReference type="Rhea" id="RHEA:12104"/>
        <dbReference type="ChEBI" id="CHEBI:15636"/>
        <dbReference type="ChEBI" id="CHEBI:57451"/>
        <dbReference type="ChEBI" id="CHEBI:63528"/>
        <dbReference type="ChEBI" id="CHEBI:246422"/>
        <dbReference type="EC" id="2.1.1.45"/>
    </reaction>
</comment>
<comment type="pathway">
    <text>Cofactor biosynthesis; tetrahydrofolate biosynthesis; 5,6,7,8-tetrahydrofolate from 7,8-dihydrofolate: step 1/1.</text>
</comment>
<comment type="similarity">
    <text evidence="2">In the N-terminal section; belongs to the dihydrofolate reductase family.</text>
</comment>
<comment type="similarity">
    <text evidence="2">In the C-terminal section; belongs to the thymidylate synthase family.</text>
</comment>
<name>DRTS_LEIAM</name>
<feature type="chain" id="PRO_0000186344" description="Bifunctional dihydrofolate reductase-thymidylate synthase">
    <location>
        <begin position="1"/>
        <end position="520"/>
    </location>
</feature>
<feature type="domain" description="DHFR">
    <location>
        <begin position="26"/>
        <end position="229"/>
    </location>
</feature>
<feature type="region of interest" description="Thymidylate synthase">
    <location>
        <begin position="234"/>
        <end position="520"/>
    </location>
</feature>
<feature type="active site" evidence="1">
    <location>
        <position position="400"/>
    </location>
</feature>
<feature type="binding site" evidence="1">
    <location>
        <position position="30"/>
    </location>
    <ligand>
        <name>substrate</name>
    </ligand>
</feature>
<feature type="binding site" evidence="1">
    <location>
        <position position="32"/>
    </location>
    <ligand>
        <name>NADP(+)</name>
        <dbReference type="ChEBI" id="CHEBI:58349"/>
    </ligand>
</feature>
<feature type="binding site" evidence="1">
    <location>
        <begin position="38"/>
        <end position="44"/>
    </location>
    <ligand>
        <name>NADP(+)</name>
        <dbReference type="ChEBI" id="CHEBI:58349"/>
    </ligand>
</feature>
<feature type="binding site" evidence="1">
    <location>
        <position position="52"/>
    </location>
    <ligand>
        <name>substrate</name>
    </ligand>
</feature>
<feature type="binding site" evidence="1">
    <location>
        <begin position="81"/>
        <end position="83"/>
    </location>
    <ligand>
        <name>NADP(+)</name>
        <dbReference type="ChEBI" id="CHEBI:58349"/>
    </ligand>
</feature>
<feature type="binding site" evidence="1">
    <location>
        <begin position="102"/>
        <end position="105"/>
    </location>
    <ligand>
        <name>NADP(+)</name>
        <dbReference type="ChEBI" id="CHEBI:58349"/>
    </ligand>
</feature>
<feature type="binding site" evidence="1">
    <location>
        <begin position="157"/>
        <end position="164"/>
    </location>
    <ligand>
        <name>NADP(+)</name>
        <dbReference type="ChEBI" id="CHEBI:58349"/>
    </ligand>
</feature>
<feature type="binding site" evidence="1">
    <location>
        <position position="162"/>
    </location>
    <ligand>
        <name>substrate</name>
    </ligand>
</feature>
<feature type="binding site" evidence="1">
    <location>
        <position position="180"/>
    </location>
    <ligand>
        <name>substrate</name>
    </ligand>
</feature>
<feature type="binding site" evidence="1">
    <location>
        <position position="254"/>
    </location>
    <ligand>
        <name>dUMP</name>
        <dbReference type="ChEBI" id="CHEBI:246422"/>
    </ligand>
</feature>
<feature type="binding site" evidence="1">
    <location>
        <position position="401"/>
    </location>
    <ligand>
        <name>dUMP</name>
        <dbReference type="ChEBI" id="CHEBI:246422"/>
    </ligand>
</feature>
<feature type="binding site" evidence="1">
    <location>
        <begin position="421"/>
        <end position="425"/>
    </location>
    <ligand>
        <name>dUMP</name>
        <dbReference type="ChEBI" id="CHEBI:246422"/>
    </ligand>
</feature>
<feature type="binding site" evidence="1">
    <location>
        <position position="433"/>
    </location>
    <ligand>
        <name>dUMP</name>
        <dbReference type="ChEBI" id="CHEBI:246422"/>
    </ligand>
</feature>
<feature type="binding site" evidence="1">
    <location>
        <begin position="463"/>
        <end position="465"/>
    </location>
    <ligand>
        <name>dUMP</name>
        <dbReference type="ChEBI" id="CHEBI:246422"/>
    </ligand>
</feature>
<dbReference type="EC" id="1.5.1.3"/>
<dbReference type="EC" id="2.1.1.45"/>
<dbReference type="EMBL" id="X51735">
    <property type="protein sequence ID" value="CAA36020.1"/>
    <property type="molecule type" value="Genomic_DNA"/>
</dbReference>
<dbReference type="PIR" id="S15756">
    <property type="entry name" value="RDLNTZ"/>
</dbReference>
<dbReference type="SMR" id="P16126"/>
<dbReference type="VEuPathDB" id="TriTrypDB:LAMA_000016400"/>
<dbReference type="VEuPathDB" id="TriTrypDB:LAMAPH8_000068400"/>
<dbReference type="UniPathway" id="UPA00077">
    <property type="reaction ID" value="UER00158"/>
</dbReference>
<dbReference type="GO" id="GO:0005829">
    <property type="term" value="C:cytosol"/>
    <property type="evidence" value="ECO:0007669"/>
    <property type="project" value="TreeGrafter"/>
</dbReference>
<dbReference type="GO" id="GO:0005739">
    <property type="term" value="C:mitochondrion"/>
    <property type="evidence" value="ECO:0007669"/>
    <property type="project" value="TreeGrafter"/>
</dbReference>
<dbReference type="GO" id="GO:0004146">
    <property type="term" value="F:dihydrofolate reductase activity"/>
    <property type="evidence" value="ECO:0007669"/>
    <property type="project" value="UniProtKB-EC"/>
</dbReference>
<dbReference type="GO" id="GO:0004799">
    <property type="term" value="F:thymidylate synthase activity"/>
    <property type="evidence" value="ECO:0007669"/>
    <property type="project" value="UniProtKB-EC"/>
</dbReference>
<dbReference type="GO" id="GO:0006231">
    <property type="term" value="P:dTMP biosynthetic process"/>
    <property type="evidence" value="ECO:0007669"/>
    <property type="project" value="InterPro"/>
</dbReference>
<dbReference type="GO" id="GO:0032259">
    <property type="term" value="P:methylation"/>
    <property type="evidence" value="ECO:0007669"/>
    <property type="project" value="UniProtKB-KW"/>
</dbReference>
<dbReference type="GO" id="GO:0006730">
    <property type="term" value="P:one-carbon metabolic process"/>
    <property type="evidence" value="ECO:0007669"/>
    <property type="project" value="UniProtKB-KW"/>
</dbReference>
<dbReference type="GO" id="GO:0046654">
    <property type="term" value="P:tetrahydrofolate biosynthetic process"/>
    <property type="evidence" value="ECO:0007669"/>
    <property type="project" value="UniProtKB-UniPathway"/>
</dbReference>
<dbReference type="CDD" id="cd00209">
    <property type="entry name" value="DHFR"/>
    <property type="match status" value="1"/>
</dbReference>
<dbReference type="CDD" id="cd00351">
    <property type="entry name" value="TS_Pyrimidine_HMase"/>
    <property type="match status" value="1"/>
</dbReference>
<dbReference type="FunFam" id="3.30.572.10:FF:000011">
    <property type="entry name" value="Bifunctional dihydrofolate reductase-thymidylate synthase"/>
    <property type="match status" value="1"/>
</dbReference>
<dbReference type="FunFam" id="3.40.430.10:FF:000017">
    <property type="entry name" value="Bifunctional dihydrofolate reductase-thymidylate synthase"/>
    <property type="match status" value="1"/>
</dbReference>
<dbReference type="Gene3D" id="3.40.430.10">
    <property type="entry name" value="Dihydrofolate Reductase, subunit A"/>
    <property type="match status" value="1"/>
</dbReference>
<dbReference type="Gene3D" id="3.30.572.10">
    <property type="entry name" value="Thymidylate synthase/dCMP hydroxymethylase domain"/>
    <property type="match status" value="1"/>
</dbReference>
<dbReference type="HAMAP" id="MF_00008">
    <property type="entry name" value="Thymidy_synth_bact"/>
    <property type="match status" value="1"/>
</dbReference>
<dbReference type="InterPro" id="IPR024072">
    <property type="entry name" value="DHFR-like_dom_sf"/>
</dbReference>
<dbReference type="InterPro" id="IPR012262">
    <property type="entry name" value="DHFR-TS"/>
</dbReference>
<dbReference type="InterPro" id="IPR017925">
    <property type="entry name" value="DHFR_CS"/>
</dbReference>
<dbReference type="InterPro" id="IPR001796">
    <property type="entry name" value="DHFR_dom"/>
</dbReference>
<dbReference type="InterPro" id="IPR045097">
    <property type="entry name" value="Thymidate_synth/dCMP_Mease"/>
</dbReference>
<dbReference type="InterPro" id="IPR023451">
    <property type="entry name" value="Thymidate_synth/dCMP_Mease_dom"/>
</dbReference>
<dbReference type="InterPro" id="IPR036926">
    <property type="entry name" value="Thymidate_synth/dCMP_Mease_sf"/>
</dbReference>
<dbReference type="InterPro" id="IPR000398">
    <property type="entry name" value="Thymidylate_synthase"/>
</dbReference>
<dbReference type="InterPro" id="IPR020940">
    <property type="entry name" value="Thymidylate_synthase_AS"/>
</dbReference>
<dbReference type="NCBIfam" id="NF002497">
    <property type="entry name" value="PRK01827.1-3"/>
    <property type="match status" value="1"/>
</dbReference>
<dbReference type="NCBIfam" id="TIGR03284">
    <property type="entry name" value="thym_sym"/>
    <property type="match status" value="1"/>
</dbReference>
<dbReference type="PANTHER" id="PTHR11548:SF2">
    <property type="entry name" value="THYMIDYLATE SYNTHASE"/>
    <property type="match status" value="1"/>
</dbReference>
<dbReference type="PANTHER" id="PTHR11548">
    <property type="entry name" value="THYMIDYLATE SYNTHASE 1"/>
    <property type="match status" value="1"/>
</dbReference>
<dbReference type="Pfam" id="PF00186">
    <property type="entry name" value="DHFR_1"/>
    <property type="match status" value="1"/>
</dbReference>
<dbReference type="Pfam" id="PF00303">
    <property type="entry name" value="Thymidylat_synt"/>
    <property type="match status" value="1"/>
</dbReference>
<dbReference type="PIRSF" id="PIRSF000389">
    <property type="entry name" value="DHFR-TS"/>
    <property type="match status" value="1"/>
</dbReference>
<dbReference type="PRINTS" id="PR00108">
    <property type="entry name" value="THYMDSNTHASE"/>
</dbReference>
<dbReference type="SUPFAM" id="SSF53597">
    <property type="entry name" value="Dihydrofolate reductase-like"/>
    <property type="match status" value="1"/>
</dbReference>
<dbReference type="SUPFAM" id="SSF55831">
    <property type="entry name" value="Thymidylate synthase/dCMP hydroxymethylase"/>
    <property type="match status" value="1"/>
</dbReference>
<dbReference type="PROSITE" id="PS00075">
    <property type="entry name" value="DHFR_1"/>
    <property type="match status" value="1"/>
</dbReference>
<dbReference type="PROSITE" id="PS51330">
    <property type="entry name" value="DHFR_2"/>
    <property type="match status" value="1"/>
</dbReference>
<dbReference type="PROSITE" id="PS00091">
    <property type="entry name" value="THYMIDYLATE_SYNTHASE"/>
    <property type="match status" value="1"/>
</dbReference>
<evidence type="ECO:0000250" key="1"/>
<evidence type="ECO:0000305" key="2"/>